<accession>Q7VUG9</accession>
<organism>
    <name type="scientific">Bordetella pertussis (strain Tohama I / ATCC BAA-589 / NCTC 13251)</name>
    <dbReference type="NCBI Taxonomy" id="257313"/>
    <lineage>
        <taxon>Bacteria</taxon>
        <taxon>Pseudomonadati</taxon>
        <taxon>Pseudomonadota</taxon>
        <taxon>Betaproteobacteria</taxon>
        <taxon>Burkholderiales</taxon>
        <taxon>Alcaligenaceae</taxon>
        <taxon>Bordetella</taxon>
    </lineage>
</organism>
<evidence type="ECO:0000255" key="1">
    <source>
        <dbReference type="HAMAP-Rule" id="MF_00233"/>
    </source>
</evidence>
<comment type="function">
    <text evidence="1">Plays a critical role in the incorporation of lipoproteins in the outer membrane after they are released by the LolA protein.</text>
</comment>
<comment type="subunit">
    <text evidence="1">Monomer.</text>
</comment>
<comment type="subcellular location">
    <subcellularLocation>
        <location evidence="1">Cell outer membrane</location>
        <topology evidence="1">Lipid-anchor</topology>
    </subcellularLocation>
</comment>
<comment type="similarity">
    <text evidence="1">Belongs to the LolB family.</text>
</comment>
<dbReference type="EMBL" id="BX640420">
    <property type="protein sequence ID" value="CAE43394.1"/>
    <property type="molecule type" value="Genomic_DNA"/>
</dbReference>
<dbReference type="RefSeq" id="NP_881692.1">
    <property type="nucleotide sequence ID" value="NC_002929.2"/>
</dbReference>
<dbReference type="RefSeq" id="WP_003818921.1">
    <property type="nucleotide sequence ID" value="NZ_CP039022.1"/>
</dbReference>
<dbReference type="SMR" id="Q7VUG9"/>
<dbReference type="STRING" id="257313.BP3127"/>
<dbReference type="PaxDb" id="257313-BP3127"/>
<dbReference type="GeneID" id="69603055"/>
<dbReference type="KEGG" id="bpe:BP3127"/>
<dbReference type="PATRIC" id="fig|257313.5.peg.3378"/>
<dbReference type="eggNOG" id="COG3017">
    <property type="taxonomic scope" value="Bacteria"/>
</dbReference>
<dbReference type="HOGENOM" id="CLU_092816_3_0_4"/>
<dbReference type="Proteomes" id="UP000002676">
    <property type="component" value="Chromosome"/>
</dbReference>
<dbReference type="GO" id="GO:0009279">
    <property type="term" value="C:cell outer membrane"/>
    <property type="evidence" value="ECO:0007669"/>
    <property type="project" value="UniProtKB-SubCell"/>
</dbReference>
<dbReference type="GO" id="GO:0044874">
    <property type="term" value="P:lipoprotein localization to outer membrane"/>
    <property type="evidence" value="ECO:0007669"/>
    <property type="project" value="UniProtKB-UniRule"/>
</dbReference>
<dbReference type="GO" id="GO:0015031">
    <property type="term" value="P:protein transport"/>
    <property type="evidence" value="ECO:0007669"/>
    <property type="project" value="UniProtKB-KW"/>
</dbReference>
<dbReference type="CDD" id="cd16326">
    <property type="entry name" value="LolB"/>
    <property type="match status" value="1"/>
</dbReference>
<dbReference type="Gene3D" id="2.50.20.10">
    <property type="entry name" value="Lipoprotein localisation LolA/LolB/LppX"/>
    <property type="match status" value="1"/>
</dbReference>
<dbReference type="HAMAP" id="MF_00233">
    <property type="entry name" value="LolB"/>
    <property type="match status" value="1"/>
</dbReference>
<dbReference type="InterPro" id="IPR029046">
    <property type="entry name" value="LolA/LolB/LppX"/>
</dbReference>
<dbReference type="InterPro" id="IPR004565">
    <property type="entry name" value="OM_lipoprot_LolB"/>
</dbReference>
<dbReference type="NCBIfam" id="TIGR00548">
    <property type="entry name" value="lolB"/>
    <property type="match status" value="1"/>
</dbReference>
<dbReference type="Pfam" id="PF03550">
    <property type="entry name" value="LolB"/>
    <property type="match status" value="1"/>
</dbReference>
<dbReference type="SUPFAM" id="SSF89392">
    <property type="entry name" value="Prokaryotic lipoproteins and lipoprotein localization factors"/>
    <property type="match status" value="1"/>
</dbReference>
<sequence length="199" mass="21378">MSACPAPRSPVRWLHAFTLFLLLAVLAGCVSVPKPMAGAGEDVFSRVGRFAITVTESDGKQQAVQGGFAWRDDGGSYLLDLTNPLGSTEARVEGRPGMAVLTRANGERLAAEHPDALAEDALGSPVPVTGLRDWLRGRLMAGAAPDGLERDAQGRPTAFEQDGWNARLSRYDAQGPQLLVLQRQEPGRRILVRLVITQP</sequence>
<proteinExistence type="inferred from homology"/>
<gene>
    <name evidence="1" type="primary">lolB</name>
    <name type="ordered locus">BP3127</name>
</gene>
<keyword id="KW-0998">Cell outer membrane</keyword>
<keyword id="KW-0143">Chaperone</keyword>
<keyword id="KW-0449">Lipoprotein</keyword>
<keyword id="KW-0472">Membrane</keyword>
<keyword id="KW-0564">Palmitate</keyword>
<keyword id="KW-0653">Protein transport</keyword>
<keyword id="KW-1185">Reference proteome</keyword>
<keyword id="KW-0732">Signal</keyword>
<keyword id="KW-0813">Transport</keyword>
<reference key="1">
    <citation type="journal article" date="2003" name="Nat. Genet.">
        <title>Comparative analysis of the genome sequences of Bordetella pertussis, Bordetella parapertussis and Bordetella bronchiseptica.</title>
        <authorList>
            <person name="Parkhill J."/>
            <person name="Sebaihia M."/>
            <person name="Preston A."/>
            <person name="Murphy L.D."/>
            <person name="Thomson N.R."/>
            <person name="Harris D.E."/>
            <person name="Holden M.T.G."/>
            <person name="Churcher C.M."/>
            <person name="Bentley S.D."/>
            <person name="Mungall K.L."/>
            <person name="Cerdeno-Tarraga A.-M."/>
            <person name="Temple L."/>
            <person name="James K.D."/>
            <person name="Harris B."/>
            <person name="Quail M.A."/>
            <person name="Achtman M."/>
            <person name="Atkin R."/>
            <person name="Baker S."/>
            <person name="Basham D."/>
            <person name="Bason N."/>
            <person name="Cherevach I."/>
            <person name="Chillingworth T."/>
            <person name="Collins M."/>
            <person name="Cronin A."/>
            <person name="Davis P."/>
            <person name="Doggett J."/>
            <person name="Feltwell T."/>
            <person name="Goble A."/>
            <person name="Hamlin N."/>
            <person name="Hauser H."/>
            <person name="Holroyd S."/>
            <person name="Jagels K."/>
            <person name="Leather S."/>
            <person name="Moule S."/>
            <person name="Norberczak H."/>
            <person name="O'Neil S."/>
            <person name="Ormond D."/>
            <person name="Price C."/>
            <person name="Rabbinowitsch E."/>
            <person name="Rutter S."/>
            <person name="Sanders M."/>
            <person name="Saunders D."/>
            <person name="Seeger K."/>
            <person name="Sharp S."/>
            <person name="Simmonds M."/>
            <person name="Skelton J."/>
            <person name="Squares R."/>
            <person name="Squares S."/>
            <person name="Stevens K."/>
            <person name="Unwin L."/>
            <person name="Whitehead S."/>
            <person name="Barrell B.G."/>
            <person name="Maskell D.J."/>
        </authorList>
    </citation>
    <scope>NUCLEOTIDE SEQUENCE [LARGE SCALE GENOMIC DNA]</scope>
    <source>
        <strain>Tohama I / ATCC BAA-589 / NCTC 13251</strain>
    </source>
</reference>
<feature type="signal peptide" evidence="1">
    <location>
        <begin position="1"/>
        <end position="28"/>
    </location>
</feature>
<feature type="chain" id="PRO_0000018293" description="Outer-membrane lipoprotein LolB">
    <location>
        <begin position="29"/>
        <end position="199"/>
    </location>
</feature>
<feature type="lipid moiety-binding region" description="N-palmitoyl cysteine" evidence="1">
    <location>
        <position position="29"/>
    </location>
</feature>
<feature type="lipid moiety-binding region" description="S-diacylglycerol cysteine" evidence="1">
    <location>
        <position position="29"/>
    </location>
</feature>
<name>LOLB_BORPE</name>
<protein>
    <recommendedName>
        <fullName evidence="1">Outer-membrane lipoprotein LolB</fullName>
    </recommendedName>
</protein>